<feature type="chain" id="PRO_0000348957" description="Putative fatty acid desaturase 2-like protein FADS2B">
    <location>
        <begin position="1"/>
        <end position="482"/>
    </location>
</feature>
<feature type="topological domain" description="Cytoplasmic" evidence="2">
    <location>
        <begin position="1"/>
        <end position="167"/>
    </location>
</feature>
<feature type="transmembrane region" description="Helical" evidence="2">
    <location>
        <begin position="168"/>
        <end position="188"/>
    </location>
</feature>
<feature type="topological domain" description="Lumenal" evidence="2">
    <location>
        <begin position="189"/>
        <end position="190"/>
    </location>
</feature>
<feature type="transmembrane region" description="Helical" evidence="2">
    <location>
        <begin position="191"/>
        <end position="211"/>
    </location>
</feature>
<feature type="topological domain" description="Cytoplasmic" evidence="2">
    <location>
        <begin position="212"/>
        <end position="305"/>
    </location>
</feature>
<feature type="transmembrane region" description="Helical" evidence="2">
    <location>
        <begin position="306"/>
        <end position="326"/>
    </location>
</feature>
<feature type="topological domain" description="Lumenal" evidence="2">
    <location>
        <begin position="327"/>
        <end position="343"/>
    </location>
</feature>
<feature type="transmembrane region" description="Helical" evidence="2">
    <location>
        <begin position="344"/>
        <end position="364"/>
    </location>
</feature>
<feature type="topological domain" description="Cytoplasmic" evidence="2">
    <location>
        <begin position="365"/>
        <end position="482"/>
    </location>
</feature>
<feature type="domain" description="Cytochrome b5 heme-binding" evidence="3">
    <location>
        <begin position="56"/>
        <end position="132"/>
    </location>
</feature>
<feature type="region of interest" description="Disordered" evidence="4">
    <location>
        <begin position="1"/>
        <end position="31"/>
    </location>
</feature>
<feature type="short sequence motif" description="Histidine box-1">
    <location>
        <begin position="217"/>
        <end position="221"/>
    </location>
</feature>
<feature type="short sequence motif" description="Histidine box-2">
    <location>
        <begin position="254"/>
        <end position="258"/>
    </location>
</feature>
<feature type="short sequence motif" description="Histidine box-3">
    <location>
        <begin position="421"/>
        <end position="425"/>
    </location>
</feature>
<feature type="binding site" description="axial binding residue" evidence="3">
    <location>
        <position position="90"/>
    </location>
    <ligand>
        <name>heme</name>
        <dbReference type="ChEBI" id="CHEBI:30413"/>
    </ligand>
    <ligandPart>
        <name>Fe</name>
        <dbReference type="ChEBI" id="CHEBI:18248"/>
    </ligandPart>
</feature>
<feature type="binding site" description="axial binding residue" evidence="3">
    <location>
        <position position="113"/>
    </location>
    <ligand>
        <name>heme</name>
        <dbReference type="ChEBI" id="CHEBI:30413"/>
    </ligand>
    <ligandPart>
        <name>Fe</name>
        <dbReference type="ChEBI" id="CHEBI:18248"/>
    </ligandPart>
</feature>
<name>FS2P1_HUMAN</name>
<evidence type="ECO:0000250" key="1">
    <source>
        <dbReference type="UniProtKB" id="O95864"/>
    </source>
</evidence>
<evidence type="ECO:0000255" key="2"/>
<evidence type="ECO:0000255" key="3">
    <source>
        <dbReference type="PROSITE-ProRule" id="PRU00279"/>
    </source>
</evidence>
<evidence type="ECO:0000256" key="4">
    <source>
        <dbReference type="SAM" id="MobiDB-lite"/>
    </source>
</evidence>
<evidence type="ECO:0000305" key="5"/>
<evidence type="ECO:0000312" key="6">
    <source>
        <dbReference type="HGNC" id="HGNC:43618"/>
    </source>
</evidence>
<proteinExistence type="uncertain"/>
<dbReference type="EMBL" id="AP000479">
    <property type="status" value="NOT_ANNOTATED_CDS"/>
    <property type="molecule type" value="Genomic_DNA"/>
</dbReference>
<dbReference type="FunCoup" id="A8MWK0">
    <property type="interactions" value="9"/>
</dbReference>
<dbReference type="BioMuta" id="HGNC:43618"/>
<dbReference type="MassIVE" id="A8MWK0"/>
<dbReference type="PeptideAtlas" id="A8MWK0"/>
<dbReference type="AGR" id="HGNC:43618"/>
<dbReference type="GeneCards" id="FADS2B"/>
<dbReference type="HGNC" id="HGNC:43618">
    <property type="gene designation" value="FADS2B"/>
</dbReference>
<dbReference type="neXtProt" id="NX_A8MWK0"/>
<dbReference type="InParanoid" id="A8MWK0"/>
<dbReference type="PAN-GO" id="A8MWK0">
    <property type="GO annotations" value="2 GO annotations based on evolutionary models"/>
</dbReference>
<dbReference type="PhylomeDB" id="A8MWK0"/>
<dbReference type="UniPathway" id="UPA00658"/>
<dbReference type="Pharos" id="A8MWK0">
    <property type="development level" value="Tdark"/>
</dbReference>
<dbReference type="Proteomes" id="UP000005640">
    <property type="component" value="Unplaced"/>
</dbReference>
<dbReference type="RNAct" id="A8MWK0">
    <property type="molecule type" value="protein"/>
</dbReference>
<dbReference type="GO" id="GO:0005789">
    <property type="term" value="C:endoplasmic reticulum membrane"/>
    <property type="evidence" value="ECO:0007669"/>
    <property type="project" value="UniProtKB-SubCell"/>
</dbReference>
<dbReference type="GO" id="GO:0046872">
    <property type="term" value="F:metal ion binding"/>
    <property type="evidence" value="ECO:0007669"/>
    <property type="project" value="UniProtKB-KW"/>
</dbReference>
<dbReference type="GO" id="GO:0016717">
    <property type="term" value="F:oxidoreductase activity, acting on paired donors, with oxidation of a pair of donors resulting in the reduction of molecular oxygen to two molecules of water"/>
    <property type="evidence" value="ECO:0000318"/>
    <property type="project" value="GO_Central"/>
</dbReference>
<dbReference type="GO" id="GO:0006629">
    <property type="term" value="P:lipid metabolic process"/>
    <property type="evidence" value="ECO:0000318"/>
    <property type="project" value="GO_Central"/>
</dbReference>
<dbReference type="GO" id="GO:0006636">
    <property type="term" value="P:unsaturated fatty acid biosynthetic process"/>
    <property type="evidence" value="ECO:0007669"/>
    <property type="project" value="UniProtKB-UniPathway"/>
</dbReference>
<dbReference type="CDD" id="cd03506">
    <property type="entry name" value="Delta6-FADS-like"/>
    <property type="match status" value="1"/>
</dbReference>
<dbReference type="Gene3D" id="3.10.120.10">
    <property type="entry name" value="Cytochrome b5-like heme/steroid binding domain"/>
    <property type="match status" value="1"/>
</dbReference>
<dbReference type="InterPro" id="IPR001199">
    <property type="entry name" value="Cyt_B5-like_heme/steroid-bd"/>
</dbReference>
<dbReference type="InterPro" id="IPR036400">
    <property type="entry name" value="Cyt_B5-like_heme/steroid_sf"/>
</dbReference>
<dbReference type="InterPro" id="IPR005804">
    <property type="entry name" value="FA_desaturase_dom"/>
</dbReference>
<dbReference type="InterPro" id="IPR012171">
    <property type="entry name" value="Fatty_acid_desaturase"/>
</dbReference>
<dbReference type="PANTHER" id="PTHR19353">
    <property type="entry name" value="FATTY ACID DESATURASE 2"/>
    <property type="match status" value="1"/>
</dbReference>
<dbReference type="PANTHER" id="PTHR19353:SF22">
    <property type="entry name" value="FATTY ACID DESATURASE 2-LIKE PROTEIN FADS2B-RELATED"/>
    <property type="match status" value="1"/>
</dbReference>
<dbReference type="Pfam" id="PF00173">
    <property type="entry name" value="Cyt-b5"/>
    <property type="match status" value="1"/>
</dbReference>
<dbReference type="Pfam" id="PF00487">
    <property type="entry name" value="FA_desaturase"/>
    <property type="match status" value="1"/>
</dbReference>
<dbReference type="PIRSF" id="PIRSF015921">
    <property type="entry name" value="FA_sphinglp_des"/>
    <property type="match status" value="1"/>
</dbReference>
<dbReference type="SMART" id="SM01117">
    <property type="entry name" value="Cyt-b5"/>
    <property type="match status" value="1"/>
</dbReference>
<dbReference type="SUPFAM" id="SSF55856">
    <property type="entry name" value="Cytochrome b5-like heme/steroid binding domain"/>
    <property type="match status" value="1"/>
</dbReference>
<dbReference type="PROSITE" id="PS50255">
    <property type="entry name" value="CYTOCHROME_B5_2"/>
    <property type="match status" value="1"/>
</dbReference>
<accession>A8MWK0</accession>
<protein>
    <recommendedName>
        <fullName>Putative fatty acid desaturase 2-like protein FADS2B</fullName>
    </recommendedName>
    <alternativeName>
        <fullName>Fatty acid desaturase 2 pseudogene 1</fullName>
    </alternativeName>
    <alternativeName>
        <fullName evidence="6">Fatty acid desaturase 2B, pseudogene</fullName>
    </alternativeName>
</protein>
<reference key="1">
    <citation type="journal article" date="2006" name="Nature">
        <title>Human chromosome 11 DNA sequence and analysis including novel gene identification.</title>
        <authorList>
            <person name="Taylor T.D."/>
            <person name="Noguchi H."/>
            <person name="Totoki Y."/>
            <person name="Toyoda A."/>
            <person name="Kuroki Y."/>
            <person name="Dewar K."/>
            <person name="Lloyd C."/>
            <person name="Itoh T."/>
            <person name="Takeda T."/>
            <person name="Kim D.-W."/>
            <person name="She X."/>
            <person name="Barlow K.F."/>
            <person name="Bloom T."/>
            <person name="Bruford E."/>
            <person name="Chang J.L."/>
            <person name="Cuomo C.A."/>
            <person name="Eichler E."/>
            <person name="FitzGerald M.G."/>
            <person name="Jaffe D.B."/>
            <person name="LaButti K."/>
            <person name="Nicol R."/>
            <person name="Park H.-S."/>
            <person name="Seaman C."/>
            <person name="Sougnez C."/>
            <person name="Yang X."/>
            <person name="Zimmer A.R."/>
            <person name="Zody M.C."/>
            <person name="Birren B.W."/>
            <person name="Nusbaum C."/>
            <person name="Fujiyama A."/>
            <person name="Hattori M."/>
            <person name="Rogers J."/>
            <person name="Lander E.S."/>
            <person name="Sakaki Y."/>
        </authorList>
    </citation>
    <scope>NUCLEOTIDE SEQUENCE [LARGE SCALE GENOMIC DNA]</scope>
</reference>
<gene>
    <name evidence="6" type="primary">FADS2B</name>
    <name type="synonym">FADS2P1</name>
</gene>
<organism>
    <name type="scientific">Homo sapiens</name>
    <name type="common">Human</name>
    <dbReference type="NCBI Taxonomy" id="9606"/>
    <lineage>
        <taxon>Eukaryota</taxon>
        <taxon>Metazoa</taxon>
        <taxon>Chordata</taxon>
        <taxon>Craniata</taxon>
        <taxon>Vertebrata</taxon>
        <taxon>Euteleostomi</taxon>
        <taxon>Mammalia</taxon>
        <taxon>Eutheria</taxon>
        <taxon>Euarchontoglires</taxon>
        <taxon>Primates</taxon>
        <taxon>Haplorrhini</taxon>
        <taxon>Catarrhini</taxon>
        <taxon>Hominidae</taxon>
        <taxon>Homo</taxon>
    </lineage>
</organism>
<keyword id="KW-0249">Electron transport</keyword>
<keyword id="KW-0256">Endoplasmic reticulum</keyword>
<keyword id="KW-0275">Fatty acid biosynthesis</keyword>
<keyword id="KW-0276">Fatty acid metabolism</keyword>
<keyword id="KW-0349">Heme</keyword>
<keyword id="KW-0408">Iron</keyword>
<keyword id="KW-0444">Lipid biosynthesis</keyword>
<keyword id="KW-0443">Lipid metabolism</keyword>
<keyword id="KW-0472">Membrane</keyword>
<keyword id="KW-0479">Metal-binding</keyword>
<keyword id="KW-0560">Oxidoreductase</keyword>
<keyword id="KW-1185">Reference proteome</keyword>
<keyword id="KW-0812">Transmembrane</keyword>
<keyword id="KW-1133">Transmembrane helix</keyword>
<keyword id="KW-0813">Transport</keyword>
<sequence>MKFEEKCGDNGSIVGRNQSYPGEKHQPKGKPIANGEAEVYAKQEANGKCSTPRKSLSMYTWLEIQRHNHEADQLVINCKVYNVSSWADRHPGGHQVLNHCAGEDAMDVFRAMHPELDIVQLYLKPLLIGELAPGEPSQERHKNSQLVKDFQELWSIAEAMNMFHANLGFFFLHFVQILILEVLAWLIVYHFGSGWPVTMFISFLLTISQASSSFLQHDAGHLSIFRKSKWNHVVHKFVMCHLKGLSADRWNYWHFEQHVKPNIYPKDPDIDTDPLFLLGDSQPVKYGKKKIKYINYEEQHLYFYKVWLPLFMPVYLKLPSMQAMYLQRYWVCFSLQDITWVSSFYIYFITFGLYYGIFGTMLLIYLVKFLESPWIVYVTQMSHITMRMSTEENRDWLTTQVLATCNTESFFNDFTGHLNFQIEHHLFPTMPRHNYHKVAPLVRSLCAKHGLHYVNKPMLRAFGDIVRALKKSAALWADAYYE</sequence>
<comment type="pathway">
    <text>Lipid metabolism; polyunsaturated fatty acid biosynthesis.</text>
</comment>
<comment type="subcellular location">
    <subcellularLocation>
        <location evidence="1">Endoplasmic reticulum membrane</location>
        <topology evidence="2">Multi-pass membrane protein</topology>
    </subcellularLocation>
</comment>
<comment type="domain">
    <text>The histidine box domains may contain the active site and/or be involved in metal ion binding.</text>
</comment>
<comment type="similarity">
    <text evidence="5">Belongs to the fatty acid desaturase type 1 family.</text>
</comment>
<comment type="caution">
    <text evidence="5">Could be the product of a pseudogene.</text>
</comment>